<protein>
    <recommendedName>
        <fullName evidence="1">SsrA-binding protein</fullName>
    </recommendedName>
    <alternativeName>
        <fullName evidence="1">Small protein B</fullName>
    </alternativeName>
</protein>
<keyword id="KW-0963">Cytoplasm</keyword>
<keyword id="KW-0694">RNA-binding</keyword>
<name>SSRP_STRE4</name>
<dbReference type="EMBL" id="FM204883">
    <property type="protein sequence ID" value="CAW94590.1"/>
    <property type="molecule type" value="Genomic_DNA"/>
</dbReference>
<dbReference type="RefSeq" id="WP_012679865.1">
    <property type="nucleotide sequence ID" value="NC_012471.1"/>
</dbReference>
<dbReference type="SMR" id="C0MAA1"/>
<dbReference type="KEGG" id="seu:SEQ_1602"/>
<dbReference type="HOGENOM" id="CLU_108953_0_0_9"/>
<dbReference type="OrthoDB" id="9805462at2"/>
<dbReference type="Proteomes" id="UP000001365">
    <property type="component" value="Chromosome"/>
</dbReference>
<dbReference type="GO" id="GO:0005829">
    <property type="term" value="C:cytosol"/>
    <property type="evidence" value="ECO:0007669"/>
    <property type="project" value="TreeGrafter"/>
</dbReference>
<dbReference type="GO" id="GO:0003723">
    <property type="term" value="F:RNA binding"/>
    <property type="evidence" value="ECO:0007669"/>
    <property type="project" value="UniProtKB-UniRule"/>
</dbReference>
<dbReference type="GO" id="GO:0070929">
    <property type="term" value="P:trans-translation"/>
    <property type="evidence" value="ECO:0007669"/>
    <property type="project" value="UniProtKB-UniRule"/>
</dbReference>
<dbReference type="CDD" id="cd09294">
    <property type="entry name" value="SmpB"/>
    <property type="match status" value="1"/>
</dbReference>
<dbReference type="Gene3D" id="2.40.280.10">
    <property type="match status" value="1"/>
</dbReference>
<dbReference type="HAMAP" id="MF_00023">
    <property type="entry name" value="SmpB"/>
    <property type="match status" value="1"/>
</dbReference>
<dbReference type="InterPro" id="IPR023620">
    <property type="entry name" value="SmpB"/>
</dbReference>
<dbReference type="InterPro" id="IPR000037">
    <property type="entry name" value="SsrA-bd_prot"/>
</dbReference>
<dbReference type="InterPro" id="IPR020081">
    <property type="entry name" value="SsrA-bd_prot_CS"/>
</dbReference>
<dbReference type="NCBIfam" id="NF003843">
    <property type="entry name" value="PRK05422.1"/>
    <property type="match status" value="1"/>
</dbReference>
<dbReference type="NCBIfam" id="TIGR00086">
    <property type="entry name" value="smpB"/>
    <property type="match status" value="1"/>
</dbReference>
<dbReference type="PANTHER" id="PTHR30308:SF2">
    <property type="entry name" value="SSRA-BINDING PROTEIN"/>
    <property type="match status" value="1"/>
</dbReference>
<dbReference type="PANTHER" id="PTHR30308">
    <property type="entry name" value="TMRNA-BINDING COMPONENT OF TRANS-TRANSLATION TAGGING COMPLEX"/>
    <property type="match status" value="1"/>
</dbReference>
<dbReference type="Pfam" id="PF01668">
    <property type="entry name" value="SmpB"/>
    <property type="match status" value="1"/>
</dbReference>
<dbReference type="SUPFAM" id="SSF74982">
    <property type="entry name" value="Small protein B (SmpB)"/>
    <property type="match status" value="1"/>
</dbReference>
<dbReference type="PROSITE" id="PS01317">
    <property type="entry name" value="SSRP"/>
    <property type="match status" value="1"/>
</dbReference>
<proteinExistence type="inferred from homology"/>
<accession>C0MAA1</accession>
<feature type="chain" id="PRO_1000197625" description="SsrA-binding protein">
    <location>
        <begin position="1"/>
        <end position="155"/>
    </location>
</feature>
<sequence length="155" mass="17742">MAKGEGNVLAQHKKARHDYHIVETVEAGIVLTGTEIKSVRAARIQLKDGFAQIKNGEAWLVNVHIAPFEQGNIWNADPERTRKLLLKKREIQHLADELKGTGMTLIPLKVYLKDGFAKVLIGLAKGKHDYDKRESIKRREQDRDIRRVMKSVNRR</sequence>
<reference key="1">
    <citation type="journal article" date="2009" name="PLoS Pathog.">
        <title>Genomic evidence for the evolution of Streptococcus equi: host restriction, increased virulence, and genetic exchange with human pathogens.</title>
        <authorList>
            <person name="Holden M.T.G."/>
            <person name="Heather Z."/>
            <person name="Paillot R."/>
            <person name="Steward K.F."/>
            <person name="Webb K."/>
            <person name="Ainslie F."/>
            <person name="Jourdan T."/>
            <person name="Bason N.C."/>
            <person name="Holroyd N.E."/>
            <person name="Mungall K."/>
            <person name="Quail M.A."/>
            <person name="Sanders M."/>
            <person name="Simmonds M."/>
            <person name="Willey D."/>
            <person name="Brooks K."/>
            <person name="Aanensen D.M."/>
            <person name="Spratt B.G."/>
            <person name="Jolley K.A."/>
            <person name="Maiden M.C.J."/>
            <person name="Kehoe M."/>
            <person name="Chanter N."/>
            <person name="Bentley S.D."/>
            <person name="Robinson C."/>
            <person name="Maskell D.J."/>
            <person name="Parkhill J."/>
            <person name="Waller A.S."/>
        </authorList>
    </citation>
    <scope>NUCLEOTIDE SEQUENCE [LARGE SCALE GENOMIC DNA]</scope>
    <source>
        <strain>4047</strain>
    </source>
</reference>
<evidence type="ECO:0000255" key="1">
    <source>
        <dbReference type="HAMAP-Rule" id="MF_00023"/>
    </source>
</evidence>
<gene>
    <name evidence="1" type="primary">smpB</name>
    <name type="ordered locus">SEQ_1602</name>
</gene>
<comment type="function">
    <text evidence="1">Required for rescue of stalled ribosomes mediated by trans-translation. Binds to transfer-messenger RNA (tmRNA), required for stable association of tmRNA with ribosomes. tmRNA and SmpB together mimic tRNA shape, replacing the anticodon stem-loop with SmpB. tmRNA is encoded by the ssrA gene; the 2 termini fold to resemble tRNA(Ala) and it encodes a 'tag peptide', a short internal open reading frame. During trans-translation Ala-aminoacylated tmRNA acts like a tRNA, entering the A-site of stalled ribosomes, displacing the stalled mRNA. The ribosome then switches to translate the ORF on the tmRNA; the nascent peptide is terminated with the 'tag peptide' encoded by the tmRNA and targeted for degradation. The ribosome is freed to recommence translation, which seems to be the essential function of trans-translation.</text>
</comment>
<comment type="subcellular location">
    <subcellularLocation>
        <location evidence="1">Cytoplasm</location>
    </subcellularLocation>
    <text evidence="1">The tmRNA-SmpB complex associates with stalled 70S ribosomes.</text>
</comment>
<comment type="similarity">
    <text evidence="1">Belongs to the SmpB family.</text>
</comment>
<organism>
    <name type="scientific">Streptococcus equi subsp. equi (strain 4047)</name>
    <dbReference type="NCBI Taxonomy" id="553482"/>
    <lineage>
        <taxon>Bacteria</taxon>
        <taxon>Bacillati</taxon>
        <taxon>Bacillota</taxon>
        <taxon>Bacilli</taxon>
        <taxon>Lactobacillales</taxon>
        <taxon>Streptococcaceae</taxon>
        <taxon>Streptococcus</taxon>
    </lineage>
</organism>